<protein>
    <recommendedName>
        <fullName evidence="1">DNA replication and repair protein RecF</fullName>
    </recommendedName>
</protein>
<sequence>MITSIELRNFRNLENYKVLINKPLVIIQGLNGVGKTSILESIYFAATTKSHRSSVEKDMIQYDKPYASVKLIEDSKLHEIVLTPNGKRTTINKSEVRKISDYIGQLRVVMFAPEDLMLIKGSPSERRYFLDMELMQVSKTYLRNLNSYKKILKQRNALLKKNRNLTDYTFLNILGEQLYDVGIQIFDERQKFIEALNQKFKTIQTKYKDFEVEMLYEPNVTKENFLKHLKTKQKQDIMYETTTAGIHKDDFKLLYKGLNAKDSASQGTSRLIVIELKLALLEWIKEVTKTDAILLLDDVLSELDLERQNLFMSQLSKNHQVFITTALPINGHIDFQKIVLQEGETINAK</sequence>
<name>RECF_ACHLI</name>
<evidence type="ECO:0000255" key="1">
    <source>
        <dbReference type="HAMAP-Rule" id="MF_00365"/>
    </source>
</evidence>
<reference key="1">
    <citation type="journal article" date="2011" name="J. Bacteriol.">
        <title>Complete genome and proteome of Acholeplasma laidlawii.</title>
        <authorList>
            <person name="Lazarev V.N."/>
            <person name="Levitskii S.A."/>
            <person name="Basovskii Y.I."/>
            <person name="Chukin M.M."/>
            <person name="Akopian T.A."/>
            <person name="Vereshchagin V.V."/>
            <person name="Kostrjukova E.S."/>
            <person name="Kovaleva G.Y."/>
            <person name="Kazanov M.D."/>
            <person name="Malko D.B."/>
            <person name="Vitreschak A.G."/>
            <person name="Sernova N.V."/>
            <person name="Gelfand M.S."/>
            <person name="Demina I.A."/>
            <person name="Serebryakova M.V."/>
            <person name="Galyamina M.A."/>
            <person name="Vtyurin N.N."/>
            <person name="Rogov S.I."/>
            <person name="Alexeev D.G."/>
            <person name="Ladygina V.G."/>
            <person name="Govorun V.M."/>
        </authorList>
    </citation>
    <scope>NUCLEOTIDE SEQUENCE [LARGE SCALE GENOMIC DNA]</scope>
    <source>
        <strain>PG-8A</strain>
    </source>
</reference>
<organism>
    <name type="scientific">Acholeplasma laidlawii (strain PG-8A)</name>
    <dbReference type="NCBI Taxonomy" id="441768"/>
    <lineage>
        <taxon>Bacteria</taxon>
        <taxon>Bacillati</taxon>
        <taxon>Mycoplasmatota</taxon>
        <taxon>Mollicutes</taxon>
        <taxon>Acholeplasmatales</taxon>
        <taxon>Acholeplasmataceae</taxon>
        <taxon>Acholeplasma</taxon>
    </lineage>
</organism>
<gene>
    <name evidence="1" type="primary">recF</name>
    <name type="ordered locus">ACL_0005</name>
</gene>
<keyword id="KW-0067">ATP-binding</keyword>
<keyword id="KW-0963">Cytoplasm</keyword>
<keyword id="KW-0227">DNA damage</keyword>
<keyword id="KW-0234">DNA repair</keyword>
<keyword id="KW-0235">DNA replication</keyword>
<keyword id="KW-0238">DNA-binding</keyword>
<keyword id="KW-0547">Nucleotide-binding</keyword>
<keyword id="KW-1185">Reference proteome</keyword>
<keyword id="KW-0742">SOS response</keyword>
<comment type="function">
    <text evidence="1">The RecF protein is involved in DNA metabolism; it is required for DNA replication and normal SOS inducibility. RecF binds preferentially to single-stranded, linear DNA. It also seems to bind ATP.</text>
</comment>
<comment type="subcellular location">
    <subcellularLocation>
        <location evidence="1">Cytoplasm</location>
    </subcellularLocation>
</comment>
<comment type="similarity">
    <text evidence="1">Belongs to the RecF family.</text>
</comment>
<dbReference type="EMBL" id="CP000896">
    <property type="protein sequence ID" value="ABX80648.1"/>
    <property type="molecule type" value="Genomic_DNA"/>
</dbReference>
<dbReference type="RefSeq" id="WP_012241979.1">
    <property type="nucleotide sequence ID" value="NC_010163.1"/>
</dbReference>
<dbReference type="SMR" id="A9NE68"/>
<dbReference type="STRING" id="441768.ACL_0005"/>
<dbReference type="GeneID" id="41338209"/>
<dbReference type="KEGG" id="acl:ACL_0005"/>
<dbReference type="eggNOG" id="COG1195">
    <property type="taxonomic scope" value="Bacteria"/>
</dbReference>
<dbReference type="HOGENOM" id="CLU_040267_0_1_14"/>
<dbReference type="OrthoDB" id="9803889at2"/>
<dbReference type="Proteomes" id="UP000008558">
    <property type="component" value="Chromosome"/>
</dbReference>
<dbReference type="GO" id="GO:0005737">
    <property type="term" value="C:cytoplasm"/>
    <property type="evidence" value="ECO:0007669"/>
    <property type="project" value="UniProtKB-SubCell"/>
</dbReference>
<dbReference type="GO" id="GO:0005524">
    <property type="term" value="F:ATP binding"/>
    <property type="evidence" value="ECO:0007669"/>
    <property type="project" value="UniProtKB-UniRule"/>
</dbReference>
<dbReference type="GO" id="GO:0003697">
    <property type="term" value="F:single-stranded DNA binding"/>
    <property type="evidence" value="ECO:0007669"/>
    <property type="project" value="UniProtKB-UniRule"/>
</dbReference>
<dbReference type="GO" id="GO:0006260">
    <property type="term" value="P:DNA replication"/>
    <property type="evidence" value="ECO:0007669"/>
    <property type="project" value="UniProtKB-UniRule"/>
</dbReference>
<dbReference type="GO" id="GO:0000731">
    <property type="term" value="P:DNA synthesis involved in DNA repair"/>
    <property type="evidence" value="ECO:0007669"/>
    <property type="project" value="TreeGrafter"/>
</dbReference>
<dbReference type="GO" id="GO:0006302">
    <property type="term" value="P:double-strand break repair"/>
    <property type="evidence" value="ECO:0007669"/>
    <property type="project" value="TreeGrafter"/>
</dbReference>
<dbReference type="GO" id="GO:0009432">
    <property type="term" value="P:SOS response"/>
    <property type="evidence" value="ECO:0007669"/>
    <property type="project" value="UniProtKB-UniRule"/>
</dbReference>
<dbReference type="Gene3D" id="3.40.50.300">
    <property type="entry name" value="P-loop containing nucleotide triphosphate hydrolases"/>
    <property type="match status" value="1"/>
</dbReference>
<dbReference type="Gene3D" id="1.20.1050.90">
    <property type="entry name" value="RecF/RecN/SMC, N-terminal domain"/>
    <property type="match status" value="1"/>
</dbReference>
<dbReference type="HAMAP" id="MF_00365">
    <property type="entry name" value="RecF"/>
    <property type="match status" value="1"/>
</dbReference>
<dbReference type="InterPro" id="IPR001238">
    <property type="entry name" value="DNA-binding_RecF"/>
</dbReference>
<dbReference type="InterPro" id="IPR018078">
    <property type="entry name" value="DNA-binding_RecF_CS"/>
</dbReference>
<dbReference type="InterPro" id="IPR027417">
    <property type="entry name" value="P-loop_NTPase"/>
</dbReference>
<dbReference type="InterPro" id="IPR003395">
    <property type="entry name" value="RecF/RecN/SMC_N"/>
</dbReference>
<dbReference type="InterPro" id="IPR042174">
    <property type="entry name" value="RecF_2"/>
</dbReference>
<dbReference type="NCBIfam" id="TIGR00611">
    <property type="entry name" value="recf"/>
    <property type="match status" value="1"/>
</dbReference>
<dbReference type="PANTHER" id="PTHR32182">
    <property type="entry name" value="DNA REPLICATION AND REPAIR PROTEIN RECF"/>
    <property type="match status" value="1"/>
</dbReference>
<dbReference type="PANTHER" id="PTHR32182:SF0">
    <property type="entry name" value="DNA REPLICATION AND REPAIR PROTEIN RECF"/>
    <property type="match status" value="1"/>
</dbReference>
<dbReference type="Pfam" id="PF02463">
    <property type="entry name" value="SMC_N"/>
    <property type="match status" value="1"/>
</dbReference>
<dbReference type="SUPFAM" id="SSF52540">
    <property type="entry name" value="P-loop containing nucleoside triphosphate hydrolases"/>
    <property type="match status" value="1"/>
</dbReference>
<dbReference type="PROSITE" id="PS00617">
    <property type="entry name" value="RECF_1"/>
    <property type="match status" value="1"/>
</dbReference>
<dbReference type="PROSITE" id="PS00618">
    <property type="entry name" value="RECF_2"/>
    <property type="match status" value="1"/>
</dbReference>
<accession>A9NE68</accession>
<proteinExistence type="inferred from homology"/>
<feature type="chain" id="PRO_1000079579" description="DNA replication and repair protein RecF">
    <location>
        <begin position="1"/>
        <end position="349"/>
    </location>
</feature>
<feature type="binding site" evidence="1">
    <location>
        <begin position="29"/>
        <end position="36"/>
    </location>
    <ligand>
        <name>ATP</name>
        <dbReference type="ChEBI" id="CHEBI:30616"/>
    </ligand>
</feature>